<reference key="1">
    <citation type="journal article" date="2000" name="Proc. Natl. Acad. Sci. U.S.A.">
        <title>Genome sequence of Halobacterium species NRC-1.</title>
        <authorList>
            <person name="Ng W.V."/>
            <person name="Kennedy S.P."/>
            <person name="Mahairas G.G."/>
            <person name="Berquist B."/>
            <person name="Pan M."/>
            <person name="Shukla H.D."/>
            <person name="Lasky S.R."/>
            <person name="Baliga N.S."/>
            <person name="Thorsson V."/>
            <person name="Sbrogna J."/>
            <person name="Swartzell S."/>
            <person name="Weir D."/>
            <person name="Hall J."/>
            <person name="Dahl T.A."/>
            <person name="Welti R."/>
            <person name="Goo Y.A."/>
            <person name="Leithauser B."/>
            <person name="Keller K."/>
            <person name="Cruz R."/>
            <person name="Danson M.J."/>
            <person name="Hough D.W."/>
            <person name="Maddocks D.G."/>
            <person name="Jablonski P.E."/>
            <person name="Krebs M.P."/>
            <person name="Angevine C.M."/>
            <person name="Dale H."/>
            <person name="Isenbarger T.A."/>
            <person name="Peck R.F."/>
            <person name="Pohlschroder M."/>
            <person name="Spudich J.L."/>
            <person name="Jung K.-H."/>
            <person name="Alam M."/>
            <person name="Freitas T."/>
            <person name="Hou S."/>
            <person name="Daniels C.J."/>
            <person name="Dennis P.P."/>
            <person name="Omer A.D."/>
            <person name="Ebhardt H."/>
            <person name="Lowe T.M."/>
            <person name="Liang P."/>
            <person name="Riley M."/>
            <person name="Hood L."/>
            <person name="DasSarma S."/>
        </authorList>
    </citation>
    <scope>NUCLEOTIDE SEQUENCE [LARGE SCALE GENOMIC DNA]</scope>
    <source>
        <strain>ATCC 700922 / JCM 11081 / NRC-1</strain>
    </source>
</reference>
<accession>Q9HMC3</accession>
<sequence length="173" mass="19363">MRVDIVPVGDVPAHVKRQASSSLRSVYDCEVVVASEQDVPTAAYDEARSQYRAAEFIDTATRATSGDKTIAITPHDLFYRRRNYVFGLAYLDGRGCVVSTYRLQTSSDGGFSNRSSSDVFDDRVRKEVVHELGHTLGLEHCDNNRCAMNFSPTVREVDRKEENLCGSCQRTVF</sequence>
<protein>
    <recommendedName>
        <fullName evidence="1">Archaemetzincin</fullName>
        <ecNumber evidence="1">3.4.-.-</ecNumber>
    </recommendedName>
</protein>
<gene>
    <name evidence="1" type="primary">amzA</name>
    <name type="ordered locus">VNG_2610C</name>
</gene>
<feature type="chain" id="PRO_0000159625" description="Archaemetzincin">
    <location>
        <begin position="1"/>
        <end position="173"/>
    </location>
</feature>
<feature type="active site" description="Proton acceptor" evidence="1">
    <location>
        <position position="131"/>
    </location>
</feature>
<feature type="binding site" evidence="1">
    <location>
        <position position="130"/>
    </location>
    <ligand>
        <name>Zn(2+)</name>
        <dbReference type="ChEBI" id="CHEBI:29105"/>
        <label>1</label>
        <note>catalytic</note>
    </ligand>
</feature>
<feature type="binding site" evidence="1">
    <location>
        <position position="134"/>
    </location>
    <ligand>
        <name>Zn(2+)</name>
        <dbReference type="ChEBI" id="CHEBI:29105"/>
        <label>1</label>
        <note>catalytic</note>
    </ligand>
</feature>
<feature type="binding site" evidence="1">
    <location>
        <position position="140"/>
    </location>
    <ligand>
        <name>Zn(2+)</name>
        <dbReference type="ChEBI" id="CHEBI:29105"/>
        <label>1</label>
        <note>catalytic</note>
    </ligand>
</feature>
<feature type="binding site" evidence="1">
    <location>
        <position position="141"/>
    </location>
    <ligand>
        <name>Zn(2+)</name>
        <dbReference type="ChEBI" id="CHEBI:29105"/>
        <label>2</label>
    </ligand>
</feature>
<feature type="binding site" evidence="1">
    <location>
        <position position="146"/>
    </location>
    <ligand>
        <name>Zn(2+)</name>
        <dbReference type="ChEBI" id="CHEBI:29105"/>
        <label>2</label>
    </ligand>
</feature>
<feature type="binding site" evidence="1">
    <location>
        <position position="165"/>
    </location>
    <ligand>
        <name>Zn(2+)</name>
        <dbReference type="ChEBI" id="CHEBI:29105"/>
        <label>2</label>
    </ligand>
</feature>
<feature type="binding site" evidence="1">
    <location>
        <position position="168"/>
    </location>
    <ligand>
        <name>Zn(2+)</name>
        <dbReference type="ChEBI" id="CHEBI:29105"/>
        <label>2</label>
    </ligand>
</feature>
<name>AMZA_HALSA</name>
<evidence type="ECO:0000255" key="1">
    <source>
        <dbReference type="HAMAP-Rule" id="MF_01842"/>
    </source>
</evidence>
<keyword id="KW-0378">Hydrolase</keyword>
<keyword id="KW-0479">Metal-binding</keyword>
<keyword id="KW-0482">Metalloprotease</keyword>
<keyword id="KW-0645">Protease</keyword>
<keyword id="KW-1185">Reference proteome</keyword>
<keyword id="KW-0862">Zinc</keyword>
<proteinExistence type="inferred from homology"/>
<dbReference type="EC" id="3.4.-.-" evidence="1"/>
<dbReference type="EMBL" id="AE004437">
    <property type="protein sequence ID" value="AAG20648.1"/>
    <property type="molecule type" value="Genomic_DNA"/>
</dbReference>
<dbReference type="PIR" id="D84410">
    <property type="entry name" value="D84410"/>
</dbReference>
<dbReference type="RefSeq" id="WP_010903951.1">
    <property type="nucleotide sequence ID" value="NC_002607.1"/>
</dbReference>
<dbReference type="SMR" id="Q9HMC3"/>
<dbReference type="STRING" id="64091.VNG_2610C"/>
<dbReference type="PaxDb" id="64091-VNG_2610C"/>
<dbReference type="KEGG" id="hal:VNG_2610C"/>
<dbReference type="PATRIC" id="fig|64091.14.peg.2022"/>
<dbReference type="HOGENOM" id="CLU_108521_2_0_2"/>
<dbReference type="InParanoid" id="Q9HMC3"/>
<dbReference type="OrthoDB" id="50281at2157"/>
<dbReference type="PhylomeDB" id="Q9HMC3"/>
<dbReference type="Proteomes" id="UP000000554">
    <property type="component" value="Chromosome"/>
</dbReference>
<dbReference type="GO" id="GO:0008237">
    <property type="term" value="F:metallopeptidase activity"/>
    <property type="evidence" value="ECO:0007669"/>
    <property type="project" value="UniProtKB-UniRule"/>
</dbReference>
<dbReference type="GO" id="GO:0008270">
    <property type="term" value="F:zinc ion binding"/>
    <property type="evidence" value="ECO:0007669"/>
    <property type="project" value="UniProtKB-UniRule"/>
</dbReference>
<dbReference type="GO" id="GO:0006508">
    <property type="term" value="P:proteolysis"/>
    <property type="evidence" value="ECO:0007669"/>
    <property type="project" value="UniProtKB-UniRule"/>
</dbReference>
<dbReference type="CDD" id="cd11375">
    <property type="entry name" value="Peptidase_M54"/>
    <property type="match status" value="1"/>
</dbReference>
<dbReference type="Gene3D" id="3.40.390.10">
    <property type="entry name" value="Collagenase (Catalytic Domain)"/>
    <property type="match status" value="1"/>
</dbReference>
<dbReference type="HAMAP" id="MF_01842">
    <property type="entry name" value="Archaemetzincin"/>
    <property type="match status" value="1"/>
</dbReference>
<dbReference type="InterPro" id="IPR024079">
    <property type="entry name" value="MetalloPept_cat_dom_sf"/>
</dbReference>
<dbReference type="InterPro" id="IPR012962">
    <property type="entry name" value="Pept_M54_archaemetzincn"/>
</dbReference>
<dbReference type="InterPro" id="IPR012091">
    <property type="entry name" value="Pept_M54_archaemetzncn_arc/bac"/>
</dbReference>
<dbReference type="NCBIfam" id="NF033823">
    <property type="entry name" value="archmetzin"/>
    <property type="match status" value="1"/>
</dbReference>
<dbReference type="PANTHER" id="PTHR15910">
    <property type="entry name" value="ARCHAEMETZINCIN"/>
    <property type="match status" value="1"/>
</dbReference>
<dbReference type="PANTHER" id="PTHR15910:SF1">
    <property type="entry name" value="ARCHAEMETZINCIN-2"/>
    <property type="match status" value="1"/>
</dbReference>
<dbReference type="Pfam" id="PF07998">
    <property type="entry name" value="Peptidase_M54"/>
    <property type="match status" value="1"/>
</dbReference>
<dbReference type="PIRSF" id="PIRSF005785">
    <property type="entry name" value="Zn-prot_arch"/>
    <property type="match status" value="1"/>
</dbReference>
<dbReference type="SUPFAM" id="SSF55486">
    <property type="entry name" value="Metalloproteases ('zincins'), catalytic domain"/>
    <property type="match status" value="1"/>
</dbReference>
<organism>
    <name type="scientific">Halobacterium salinarum (strain ATCC 700922 / JCM 11081 / NRC-1)</name>
    <name type="common">Halobacterium halobium</name>
    <dbReference type="NCBI Taxonomy" id="64091"/>
    <lineage>
        <taxon>Archaea</taxon>
        <taxon>Methanobacteriati</taxon>
        <taxon>Methanobacteriota</taxon>
        <taxon>Stenosarchaea group</taxon>
        <taxon>Halobacteria</taxon>
        <taxon>Halobacteriales</taxon>
        <taxon>Halobacteriaceae</taxon>
        <taxon>Halobacterium</taxon>
        <taxon>Halobacterium salinarum NRC-34001</taxon>
    </lineage>
</organism>
<comment type="function">
    <text evidence="1">Probable zinc metalloprotease whose natural substrate is unknown.</text>
</comment>
<comment type="cofactor">
    <cofactor evidence="1">
        <name>Zn(2+)</name>
        <dbReference type="ChEBI" id="CHEBI:29105"/>
    </cofactor>
    <text evidence="1">Binds 2 Zn(2+) ions per subunit. One is catalytic, whereas the other seems to have a structural role.</text>
</comment>
<comment type="subunit">
    <text evidence="1">Monomer.</text>
</comment>
<comment type="similarity">
    <text evidence="1">Belongs to the peptidase M54 family.</text>
</comment>